<feature type="chain" id="PRO_1000009959" description="Uracil-DNA glycosylase">
    <location>
        <begin position="1"/>
        <end position="217"/>
    </location>
</feature>
<feature type="active site" description="Proton acceptor" evidence="1">
    <location>
        <position position="62"/>
    </location>
</feature>
<reference key="1">
    <citation type="journal article" date="2006" name="Proc. Natl. Acad. Sci. U.S.A.">
        <title>Comparative genomics of the lactic acid bacteria.</title>
        <authorList>
            <person name="Makarova K.S."/>
            <person name="Slesarev A."/>
            <person name="Wolf Y.I."/>
            <person name="Sorokin A."/>
            <person name="Mirkin B."/>
            <person name="Koonin E.V."/>
            <person name="Pavlov A."/>
            <person name="Pavlova N."/>
            <person name="Karamychev V."/>
            <person name="Polouchine N."/>
            <person name="Shakhova V."/>
            <person name="Grigoriev I."/>
            <person name="Lou Y."/>
            <person name="Rohksar D."/>
            <person name="Lucas S."/>
            <person name="Huang K."/>
            <person name="Goodstein D.M."/>
            <person name="Hawkins T."/>
            <person name="Plengvidhya V."/>
            <person name="Welker D."/>
            <person name="Hughes J."/>
            <person name="Goh Y."/>
            <person name="Benson A."/>
            <person name="Baldwin K."/>
            <person name="Lee J.-H."/>
            <person name="Diaz-Muniz I."/>
            <person name="Dosti B."/>
            <person name="Smeianov V."/>
            <person name="Wechter W."/>
            <person name="Barabote R."/>
            <person name="Lorca G."/>
            <person name="Altermann E."/>
            <person name="Barrangou R."/>
            <person name="Ganesan B."/>
            <person name="Xie Y."/>
            <person name="Rawsthorne H."/>
            <person name="Tamir D."/>
            <person name="Parker C."/>
            <person name="Breidt F."/>
            <person name="Broadbent J.R."/>
            <person name="Hutkins R."/>
            <person name="O'Sullivan D."/>
            <person name="Steele J."/>
            <person name="Unlu G."/>
            <person name="Saier M.H. Jr."/>
            <person name="Klaenhammer T."/>
            <person name="Richardson P."/>
            <person name="Kozyavkin S."/>
            <person name="Weimer B.C."/>
            <person name="Mills D.A."/>
        </authorList>
    </citation>
    <scope>NUCLEOTIDE SEQUENCE [LARGE SCALE GENOMIC DNA]</scope>
    <source>
        <strain>ATCC BAA-491 / LMD-9</strain>
    </source>
</reference>
<dbReference type="EC" id="3.2.2.27" evidence="1"/>
<dbReference type="EMBL" id="CP000419">
    <property type="protein sequence ID" value="ABJ66246.1"/>
    <property type="molecule type" value="Genomic_DNA"/>
</dbReference>
<dbReference type="RefSeq" id="WP_011681153.1">
    <property type="nucleotide sequence ID" value="NC_008532.1"/>
</dbReference>
<dbReference type="SMR" id="Q03KM6"/>
<dbReference type="KEGG" id="ste:STER_1041"/>
<dbReference type="HOGENOM" id="CLU_032162_3_0_9"/>
<dbReference type="GO" id="GO:0005737">
    <property type="term" value="C:cytoplasm"/>
    <property type="evidence" value="ECO:0007669"/>
    <property type="project" value="UniProtKB-SubCell"/>
</dbReference>
<dbReference type="GO" id="GO:0004844">
    <property type="term" value="F:uracil DNA N-glycosylase activity"/>
    <property type="evidence" value="ECO:0007669"/>
    <property type="project" value="UniProtKB-UniRule"/>
</dbReference>
<dbReference type="GO" id="GO:0097510">
    <property type="term" value="P:base-excision repair, AP site formation via deaminated base removal"/>
    <property type="evidence" value="ECO:0007669"/>
    <property type="project" value="TreeGrafter"/>
</dbReference>
<dbReference type="CDD" id="cd10027">
    <property type="entry name" value="UDG-F1-like"/>
    <property type="match status" value="1"/>
</dbReference>
<dbReference type="FunFam" id="3.40.470.10:FF:000008">
    <property type="entry name" value="Uracil-DNA glycosylase"/>
    <property type="match status" value="1"/>
</dbReference>
<dbReference type="Gene3D" id="3.40.470.10">
    <property type="entry name" value="Uracil-DNA glycosylase-like domain"/>
    <property type="match status" value="1"/>
</dbReference>
<dbReference type="HAMAP" id="MF_00148">
    <property type="entry name" value="UDG"/>
    <property type="match status" value="1"/>
</dbReference>
<dbReference type="InterPro" id="IPR002043">
    <property type="entry name" value="UDG_fam1"/>
</dbReference>
<dbReference type="InterPro" id="IPR018085">
    <property type="entry name" value="Ura-DNA_Glyclase_AS"/>
</dbReference>
<dbReference type="InterPro" id="IPR005122">
    <property type="entry name" value="Uracil-DNA_glycosylase-like"/>
</dbReference>
<dbReference type="InterPro" id="IPR036895">
    <property type="entry name" value="Uracil-DNA_glycosylase-like_sf"/>
</dbReference>
<dbReference type="NCBIfam" id="NF003588">
    <property type="entry name" value="PRK05254.1-1"/>
    <property type="match status" value="1"/>
</dbReference>
<dbReference type="NCBIfam" id="NF003589">
    <property type="entry name" value="PRK05254.1-2"/>
    <property type="match status" value="1"/>
</dbReference>
<dbReference type="NCBIfam" id="NF003591">
    <property type="entry name" value="PRK05254.1-4"/>
    <property type="match status" value="1"/>
</dbReference>
<dbReference type="NCBIfam" id="NF003592">
    <property type="entry name" value="PRK05254.1-5"/>
    <property type="match status" value="1"/>
</dbReference>
<dbReference type="NCBIfam" id="TIGR00628">
    <property type="entry name" value="ung"/>
    <property type="match status" value="1"/>
</dbReference>
<dbReference type="PANTHER" id="PTHR11264">
    <property type="entry name" value="URACIL-DNA GLYCOSYLASE"/>
    <property type="match status" value="1"/>
</dbReference>
<dbReference type="PANTHER" id="PTHR11264:SF0">
    <property type="entry name" value="URACIL-DNA GLYCOSYLASE"/>
    <property type="match status" value="1"/>
</dbReference>
<dbReference type="Pfam" id="PF03167">
    <property type="entry name" value="UDG"/>
    <property type="match status" value="1"/>
</dbReference>
<dbReference type="SMART" id="SM00986">
    <property type="entry name" value="UDG"/>
    <property type="match status" value="1"/>
</dbReference>
<dbReference type="SMART" id="SM00987">
    <property type="entry name" value="UreE_C"/>
    <property type="match status" value="1"/>
</dbReference>
<dbReference type="SUPFAM" id="SSF52141">
    <property type="entry name" value="Uracil-DNA glycosylase-like"/>
    <property type="match status" value="1"/>
</dbReference>
<dbReference type="PROSITE" id="PS00130">
    <property type="entry name" value="U_DNA_GLYCOSYLASE"/>
    <property type="match status" value="1"/>
</dbReference>
<evidence type="ECO:0000255" key="1">
    <source>
        <dbReference type="HAMAP-Rule" id="MF_00148"/>
    </source>
</evidence>
<gene>
    <name evidence="1" type="primary">ung</name>
    <name type="ordered locus">STER_1041</name>
</gene>
<protein>
    <recommendedName>
        <fullName evidence="1">Uracil-DNA glycosylase</fullName>
        <shortName evidence="1">UDG</shortName>
        <ecNumber evidence="1">3.2.2.27</ecNumber>
    </recommendedName>
</protein>
<organism>
    <name type="scientific">Streptococcus thermophilus (strain ATCC BAA-491 / LMD-9)</name>
    <dbReference type="NCBI Taxonomy" id="322159"/>
    <lineage>
        <taxon>Bacteria</taxon>
        <taxon>Bacillati</taxon>
        <taxon>Bacillota</taxon>
        <taxon>Bacilli</taxon>
        <taxon>Lactobacillales</taxon>
        <taxon>Streptococcaceae</taxon>
        <taxon>Streptococcus</taxon>
    </lineage>
</organism>
<sequence length="217" mass="24302">MEHSTWHRLLKEELPNHYFSKINQFMDKVYEEGTIYPPRDKVFNALLETPFEEVRVVILGQDPYHGPNQAQGLSFSVPETIPAPPSLVNILKELGEDLGPRSHHDLTTWAEQGVLLLNACLTVPAGRANGHAGQIWEPFTDAVIKVLNQKDTPVVFILWGGYARKKKSLVTNPKHAIIESAHPSPLSAYRGFFGSKPFSKANAYLVSQGQPPIDWLK</sequence>
<comment type="function">
    <text evidence="1">Excises uracil residues from the DNA which can arise as a result of misincorporation of dUMP residues by DNA polymerase or due to deamination of cytosine.</text>
</comment>
<comment type="catalytic activity">
    <reaction evidence="1">
        <text>Hydrolyzes single-stranded DNA or mismatched double-stranded DNA and polynucleotides, releasing free uracil.</text>
        <dbReference type="EC" id="3.2.2.27"/>
    </reaction>
</comment>
<comment type="subcellular location">
    <subcellularLocation>
        <location evidence="1">Cytoplasm</location>
    </subcellularLocation>
</comment>
<comment type="similarity">
    <text evidence="1">Belongs to the uracil-DNA glycosylase (UDG) superfamily. UNG family.</text>
</comment>
<name>UNG_STRTD</name>
<keyword id="KW-0963">Cytoplasm</keyword>
<keyword id="KW-0227">DNA damage</keyword>
<keyword id="KW-0234">DNA repair</keyword>
<keyword id="KW-0378">Hydrolase</keyword>
<accession>Q03KM6</accession>
<proteinExistence type="inferred from homology"/>